<dbReference type="EMBL" id="X63206">
    <property type="protein sequence ID" value="CAA44889.1"/>
    <property type="molecule type" value="Genomic_DNA"/>
</dbReference>
<dbReference type="PIR" id="S19786">
    <property type="entry name" value="F2SKL"/>
</dbReference>
<dbReference type="SMR" id="P60130"/>
<dbReference type="GO" id="GO:0009535">
    <property type="term" value="C:chloroplast thylakoid membrane"/>
    <property type="evidence" value="ECO:0007669"/>
    <property type="project" value="UniProtKB-SubCell"/>
</dbReference>
<dbReference type="GO" id="GO:0009539">
    <property type="term" value="C:photosystem II reaction center"/>
    <property type="evidence" value="ECO:0007669"/>
    <property type="project" value="InterPro"/>
</dbReference>
<dbReference type="GO" id="GO:0015979">
    <property type="term" value="P:photosynthesis"/>
    <property type="evidence" value="ECO:0007669"/>
    <property type="project" value="UniProtKB-UniRule"/>
</dbReference>
<dbReference type="HAMAP" id="MF_01317">
    <property type="entry name" value="PSII_PsbL"/>
    <property type="match status" value="1"/>
</dbReference>
<dbReference type="InterPro" id="IPR003372">
    <property type="entry name" value="PSII_PsbL"/>
</dbReference>
<dbReference type="InterPro" id="IPR037266">
    <property type="entry name" value="PSII_PsbL_sf"/>
</dbReference>
<dbReference type="NCBIfam" id="NF001972">
    <property type="entry name" value="PRK00753.1"/>
    <property type="match status" value="1"/>
</dbReference>
<dbReference type="Pfam" id="PF02419">
    <property type="entry name" value="PsbL"/>
    <property type="match status" value="1"/>
</dbReference>
<dbReference type="SUPFAM" id="SSF161017">
    <property type="entry name" value="Photosystem II reaction center protein L, PsbL"/>
    <property type="match status" value="1"/>
</dbReference>
<comment type="function">
    <text evidence="1">One of the components of the core complex of photosystem II (PSII). PSII is a light-driven water:plastoquinone oxidoreductase that uses light energy to abstract electrons from H(2)O, generating O(2) and a proton gradient subsequently used for ATP formation. It consists of a core antenna complex that captures photons, and an electron transfer chain that converts photonic excitation into a charge separation. This subunit is found at the monomer-monomer interface and is required for correct PSII assembly and/or dimerization.</text>
</comment>
<comment type="subunit">
    <text evidence="1">PSII is composed of 1 copy each of membrane proteins PsbA, PsbB, PsbC, PsbD, PsbE, PsbF, PsbH, PsbI, PsbJ, PsbK, PsbL, PsbM, PsbT, PsbX, PsbY, PsbZ, Psb30/Ycf12, at least 3 peripheral proteins of the oxygen-evolving complex and a large number of cofactors. It forms dimeric complexes.</text>
</comment>
<comment type="subcellular location">
    <subcellularLocation>
        <location evidence="1">Plastid</location>
        <location evidence="1">Chloroplast thylakoid membrane</location>
        <topology evidence="1">Single-pass membrane protein</topology>
    </subcellularLocation>
</comment>
<comment type="similarity">
    <text evidence="1">Belongs to the PsbL family.</text>
</comment>
<organism>
    <name type="scientific">Antirrhinum majus</name>
    <name type="common">Garden snapdragon</name>
    <dbReference type="NCBI Taxonomy" id="4151"/>
    <lineage>
        <taxon>Eukaryota</taxon>
        <taxon>Viridiplantae</taxon>
        <taxon>Streptophyta</taxon>
        <taxon>Embryophyta</taxon>
        <taxon>Tracheophyta</taxon>
        <taxon>Spermatophyta</taxon>
        <taxon>Magnoliopsida</taxon>
        <taxon>eudicotyledons</taxon>
        <taxon>Gunneridae</taxon>
        <taxon>Pentapetalae</taxon>
        <taxon>asterids</taxon>
        <taxon>lamiids</taxon>
        <taxon>Lamiales</taxon>
        <taxon>Plantaginaceae</taxon>
        <taxon>Antirrhineae</taxon>
        <taxon>Antirrhinum</taxon>
    </lineage>
</organism>
<proteinExistence type="inferred from homology"/>
<accession>P60130</accession>
<accession>P29301</accession>
<sequence>MTQSNPNEQSVELNRTSLYWGLLLIFVLAVLFSNYFFN</sequence>
<gene>
    <name evidence="1" type="primary">psbL</name>
</gene>
<protein>
    <recommendedName>
        <fullName evidence="1">Photosystem II reaction center protein L</fullName>
        <shortName evidence="1">PSII-L</shortName>
    </recommendedName>
</protein>
<geneLocation type="chloroplast"/>
<keyword id="KW-0150">Chloroplast</keyword>
<keyword id="KW-0472">Membrane</keyword>
<keyword id="KW-0602">Photosynthesis</keyword>
<keyword id="KW-0604">Photosystem II</keyword>
<keyword id="KW-0934">Plastid</keyword>
<keyword id="KW-0674">Reaction center</keyword>
<keyword id="KW-0793">Thylakoid</keyword>
<keyword id="KW-0812">Transmembrane</keyword>
<keyword id="KW-1133">Transmembrane helix</keyword>
<name>PSBL_ANTMA</name>
<evidence type="ECO:0000255" key="1">
    <source>
        <dbReference type="HAMAP-Rule" id="MF_01317"/>
    </source>
</evidence>
<reference key="1">
    <citation type="journal article" date="1992" name="EMBO J.">
        <title>RNA editing in tobacco chloroplasts leads to the formation of a translatable psbL mRNA by a C to U substitution within the initiation codon.</title>
        <authorList>
            <person name="Kudla J."/>
            <person name="Igloi G.L."/>
            <person name="Metzlaff M."/>
            <person name="Hagemann R."/>
            <person name="Koessel H."/>
        </authorList>
    </citation>
    <scope>NUCLEOTIDE SEQUENCE [GENOMIC DNA]</scope>
    <source>
        <strain>cv. Sippe 50</strain>
        <tissue>Leaf</tissue>
    </source>
</reference>
<feature type="chain" id="PRO_0000219678" description="Photosystem II reaction center protein L">
    <location>
        <begin position="1"/>
        <end position="38"/>
    </location>
</feature>
<feature type="transmembrane region" description="Helical" evidence="1">
    <location>
        <begin position="17"/>
        <end position="37"/>
    </location>
</feature>